<dbReference type="EMBL" id="CP001096">
    <property type="protein sequence ID" value="ACF00305.1"/>
    <property type="molecule type" value="Genomic_DNA"/>
</dbReference>
<dbReference type="RefSeq" id="WP_011157148.1">
    <property type="nucleotide sequence ID" value="NC_011004.1"/>
</dbReference>
<dbReference type="SMR" id="B3Q7H1"/>
<dbReference type="GeneID" id="66892619"/>
<dbReference type="KEGG" id="rpt:Rpal_1777"/>
<dbReference type="HOGENOM" id="CLU_092403_0_0_5"/>
<dbReference type="OrthoDB" id="9803672at2"/>
<dbReference type="Proteomes" id="UP000001725">
    <property type="component" value="Chromosome"/>
</dbReference>
<dbReference type="GO" id="GO:0015935">
    <property type="term" value="C:small ribosomal subunit"/>
    <property type="evidence" value="ECO:0007669"/>
    <property type="project" value="InterPro"/>
</dbReference>
<dbReference type="GO" id="GO:0019843">
    <property type="term" value="F:rRNA binding"/>
    <property type="evidence" value="ECO:0007669"/>
    <property type="project" value="UniProtKB-UniRule"/>
</dbReference>
<dbReference type="GO" id="GO:0003735">
    <property type="term" value="F:structural constituent of ribosome"/>
    <property type="evidence" value="ECO:0007669"/>
    <property type="project" value="InterPro"/>
</dbReference>
<dbReference type="GO" id="GO:0042274">
    <property type="term" value="P:ribosomal small subunit biogenesis"/>
    <property type="evidence" value="ECO:0007669"/>
    <property type="project" value="TreeGrafter"/>
</dbReference>
<dbReference type="GO" id="GO:0006412">
    <property type="term" value="P:translation"/>
    <property type="evidence" value="ECO:0007669"/>
    <property type="project" value="UniProtKB-UniRule"/>
</dbReference>
<dbReference type="CDD" id="cd00165">
    <property type="entry name" value="S4"/>
    <property type="match status" value="1"/>
</dbReference>
<dbReference type="FunFam" id="3.10.290.10:FF:000001">
    <property type="entry name" value="30S ribosomal protein S4"/>
    <property type="match status" value="1"/>
</dbReference>
<dbReference type="Gene3D" id="1.10.1050.10">
    <property type="entry name" value="Ribosomal Protein S4 Delta 41, Chain A, domain 1"/>
    <property type="match status" value="1"/>
</dbReference>
<dbReference type="Gene3D" id="3.10.290.10">
    <property type="entry name" value="RNA-binding S4 domain"/>
    <property type="match status" value="1"/>
</dbReference>
<dbReference type="HAMAP" id="MF_01306_B">
    <property type="entry name" value="Ribosomal_uS4_B"/>
    <property type="match status" value="1"/>
</dbReference>
<dbReference type="InterPro" id="IPR022801">
    <property type="entry name" value="Ribosomal_uS4"/>
</dbReference>
<dbReference type="InterPro" id="IPR005709">
    <property type="entry name" value="Ribosomal_uS4_bac-type"/>
</dbReference>
<dbReference type="InterPro" id="IPR018079">
    <property type="entry name" value="Ribosomal_uS4_CS"/>
</dbReference>
<dbReference type="InterPro" id="IPR001912">
    <property type="entry name" value="Ribosomal_uS4_N"/>
</dbReference>
<dbReference type="InterPro" id="IPR002942">
    <property type="entry name" value="S4_RNA-bd"/>
</dbReference>
<dbReference type="InterPro" id="IPR036986">
    <property type="entry name" value="S4_RNA-bd_sf"/>
</dbReference>
<dbReference type="NCBIfam" id="NF003717">
    <property type="entry name" value="PRK05327.1"/>
    <property type="match status" value="1"/>
</dbReference>
<dbReference type="NCBIfam" id="TIGR01017">
    <property type="entry name" value="rpsD_bact"/>
    <property type="match status" value="1"/>
</dbReference>
<dbReference type="PANTHER" id="PTHR11831">
    <property type="entry name" value="30S 40S RIBOSOMAL PROTEIN"/>
    <property type="match status" value="1"/>
</dbReference>
<dbReference type="PANTHER" id="PTHR11831:SF4">
    <property type="entry name" value="SMALL RIBOSOMAL SUBUNIT PROTEIN US4M"/>
    <property type="match status" value="1"/>
</dbReference>
<dbReference type="Pfam" id="PF00163">
    <property type="entry name" value="Ribosomal_S4"/>
    <property type="match status" value="1"/>
</dbReference>
<dbReference type="Pfam" id="PF01479">
    <property type="entry name" value="S4"/>
    <property type="match status" value="1"/>
</dbReference>
<dbReference type="SMART" id="SM01390">
    <property type="entry name" value="Ribosomal_S4"/>
    <property type="match status" value="1"/>
</dbReference>
<dbReference type="SMART" id="SM00363">
    <property type="entry name" value="S4"/>
    <property type="match status" value="1"/>
</dbReference>
<dbReference type="SUPFAM" id="SSF55174">
    <property type="entry name" value="Alpha-L RNA-binding motif"/>
    <property type="match status" value="1"/>
</dbReference>
<dbReference type="PROSITE" id="PS00632">
    <property type="entry name" value="RIBOSOMAL_S4"/>
    <property type="match status" value="1"/>
</dbReference>
<dbReference type="PROSITE" id="PS50889">
    <property type="entry name" value="S4"/>
    <property type="match status" value="1"/>
</dbReference>
<reference key="1">
    <citation type="submission" date="2008-05" db="EMBL/GenBank/DDBJ databases">
        <title>Complete sequence of Rhodopseudomonas palustris TIE-1.</title>
        <authorList>
            <consortium name="US DOE Joint Genome Institute"/>
            <person name="Lucas S."/>
            <person name="Copeland A."/>
            <person name="Lapidus A."/>
            <person name="Glavina del Rio T."/>
            <person name="Dalin E."/>
            <person name="Tice H."/>
            <person name="Pitluck S."/>
            <person name="Chain P."/>
            <person name="Malfatti S."/>
            <person name="Shin M."/>
            <person name="Vergez L."/>
            <person name="Lang D."/>
            <person name="Schmutz J."/>
            <person name="Larimer F."/>
            <person name="Land M."/>
            <person name="Hauser L."/>
            <person name="Kyrpides N."/>
            <person name="Mikhailova N."/>
            <person name="Emerson D."/>
            <person name="Newman D.K."/>
            <person name="Roden E."/>
            <person name="Richardson P."/>
        </authorList>
    </citation>
    <scope>NUCLEOTIDE SEQUENCE [LARGE SCALE GENOMIC DNA]</scope>
    <source>
        <strain>TIE-1</strain>
    </source>
</reference>
<keyword id="KW-0687">Ribonucleoprotein</keyword>
<keyword id="KW-0689">Ribosomal protein</keyword>
<keyword id="KW-0694">RNA-binding</keyword>
<keyword id="KW-0699">rRNA-binding</keyword>
<feature type="chain" id="PRO_1000140783" description="Small ribosomal subunit protein uS4">
    <location>
        <begin position="1"/>
        <end position="205"/>
    </location>
</feature>
<feature type="domain" description="S4 RNA-binding" evidence="1">
    <location>
        <begin position="94"/>
        <end position="157"/>
    </location>
</feature>
<feature type="region of interest" description="Disordered" evidence="2">
    <location>
        <begin position="19"/>
        <end position="45"/>
    </location>
</feature>
<organism>
    <name type="scientific">Rhodopseudomonas palustris (strain TIE-1)</name>
    <dbReference type="NCBI Taxonomy" id="395960"/>
    <lineage>
        <taxon>Bacteria</taxon>
        <taxon>Pseudomonadati</taxon>
        <taxon>Pseudomonadota</taxon>
        <taxon>Alphaproteobacteria</taxon>
        <taxon>Hyphomicrobiales</taxon>
        <taxon>Nitrobacteraceae</taxon>
        <taxon>Rhodopseudomonas</taxon>
    </lineage>
</organism>
<gene>
    <name evidence="1" type="primary">rpsD</name>
    <name type="ordered locus">Rpal_1777</name>
</gene>
<name>RS4_RHOPT</name>
<proteinExistence type="inferred from homology"/>
<sequence length="205" mass="23559">MTKRAEAKYKIDRRMGQNIWGRPKSPVNRREYGPGQHGQRRKGKLSDFGVQLRAKQKLKGYYANISERQFHAIYVEATRLKGDSGENLIGLLERRLDAVVYRAKFVSTMFAARQFINHGHIKVNGKRVNIPSYKVRVGDVIEVKEASKQLAFVLEASQLAERDVPDYIEVDHNKMTAKFARIPALSDVPFAVQMEPHLIVEFYSR</sequence>
<protein>
    <recommendedName>
        <fullName evidence="1">Small ribosomal subunit protein uS4</fullName>
    </recommendedName>
    <alternativeName>
        <fullName evidence="3">30S ribosomal protein S4</fullName>
    </alternativeName>
</protein>
<accession>B3Q7H1</accession>
<evidence type="ECO:0000255" key="1">
    <source>
        <dbReference type="HAMAP-Rule" id="MF_01306"/>
    </source>
</evidence>
<evidence type="ECO:0000256" key="2">
    <source>
        <dbReference type="SAM" id="MobiDB-lite"/>
    </source>
</evidence>
<evidence type="ECO:0000305" key="3"/>
<comment type="function">
    <text evidence="1">One of the primary rRNA binding proteins, it binds directly to 16S rRNA where it nucleates assembly of the body of the 30S subunit.</text>
</comment>
<comment type="function">
    <text evidence="1">With S5 and S12 plays an important role in translational accuracy.</text>
</comment>
<comment type="subunit">
    <text evidence="1">Part of the 30S ribosomal subunit. Contacts protein S5. The interaction surface between S4 and S5 is involved in control of translational fidelity.</text>
</comment>
<comment type="similarity">
    <text evidence="1">Belongs to the universal ribosomal protein uS4 family.</text>
</comment>